<proteinExistence type="inferred from homology"/>
<reference key="1">
    <citation type="journal article" date="2008" name="PLoS ONE">
        <title>Comparative analysis of Acinetobacters: three genomes for three lifestyles.</title>
        <authorList>
            <person name="Vallenet D."/>
            <person name="Nordmann P."/>
            <person name="Barbe V."/>
            <person name="Poirel L."/>
            <person name="Mangenot S."/>
            <person name="Bataille E."/>
            <person name="Dossat C."/>
            <person name="Gas S."/>
            <person name="Kreimeyer A."/>
            <person name="Lenoble P."/>
            <person name="Oztas S."/>
            <person name="Poulain J."/>
            <person name="Segurens B."/>
            <person name="Robert C."/>
            <person name="Abergel C."/>
            <person name="Claverie J.-M."/>
            <person name="Raoult D."/>
            <person name="Medigue C."/>
            <person name="Weissenbach J."/>
            <person name="Cruveiller S."/>
        </authorList>
    </citation>
    <scope>NUCLEOTIDE SEQUENCE [LARGE SCALE GENOMIC DNA]</scope>
    <source>
        <strain>SDF</strain>
    </source>
</reference>
<name>NUOB_ACIBS</name>
<gene>
    <name evidence="1" type="primary">nuoB</name>
    <name type="ordered locus">ABSDF2713</name>
</gene>
<comment type="function">
    <text evidence="1">NDH-1 shuttles electrons from NADH, via FMN and iron-sulfur (Fe-S) centers, to quinones in the respiratory chain. The immediate electron acceptor for the enzyme in this species is believed to be ubiquinone. Couples the redox reaction to proton translocation (for every two electrons transferred, four hydrogen ions are translocated across the cytoplasmic membrane), and thus conserves the redox energy in a proton gradient.</text>
</comment>
<comment type="catalytic activity">
    <reaction evidence="1">
        <text>a quinone + NADH + 5 H(+)(in) = a quinol + NAD(+) + 4 H(+)(out)</text>
        <dbReference type="Rhea" id="RHEA:57888"/>
        <dbReference type="ChEBI" id="CHEBI:15378"/>
        <dbReference type="ChEBI" id="CHEBI:24646"/>
        <dbReference type="ChEBI" id="CHEBI:57540"/>
        <dbReference type="ChEBI" id="CHEBI:57945"/>
        <dbReference type="ChEBI" id="CHEBI:132124"/>
    </reaction>
</comment>
<comment type="cofactor">
    <cofactor evidence="1">
        <name>[4Fe-4S] cluster</name>
        <dbReference type="ChEBI" id="CHEBI:49883"/>
    </cofactor>
    <text evidence="1">Binds 1 [4Fe-4S] cluster.</text>
</comment>
<comment type="subunit">
    <text evidence="1">NDH-1 is composed of 14 different subunits. Subunits NuoB, C, D, E, F, and G constitute the peripheral sector of the complex.</text>
</comment>
<comment type="subcellular location">
    <subcellularLocation>
        <location evidence="1">Cell inner membrane</location>
        <topology evidence="1">Peripheral membrane protein</topology>
        <orientation evidence="1">Cytoplasmic side</orientation>
    </subcellularLocation>
</comment>
<comment type="similarity">
    <text evidence="1">Belongs to the complex I 20 kDa subunit family.</text>
</comment>
<keyword id="KW-0004">4Fe-4S</keyword>
<keyword id="KW-0997">Cell inner membrane</keyword>
<keyword id="KW-1003">Cell membrane</keyword>
<keyword id="KW-0408">Iron</keyword>
<keyword id="KW-0411">Iron-sulfur</keyword>
<keyword id="KW-0472">Membrane</keyword>
<keyword id="KW-0479">Metal-binding</keyword>
<keyword id="KW-0520">NAD</keyword>
<keyword id="KW-0874">Quinone</keyword>
<keyword id="KW-1278">Translocase</keyword>
<keyword id="KW-0813">Transport</keyword>
<keyword id="KW-0830">Ubiquinone</keyword>
<protein>
    <recommendedName>
        <fullName evidence="1">NADH-quinone oxidoreductase subunit B</fullName>
        <ecNumber evidence="1">7.1.1.-</ecNumber>
    </recommendedName>
    <alternativeName>
        <fullName evidence="1">NADH dehydrogenase I subunit B</fullName>
    </alternativeName>
    <alternativeName>
        <fullName evidence="1">NDH-1 subunit B</fullName>
    </alternativeName>
</protein>
<sequence>MKYTLTRANPDADQYPLQDRQIVTDPLEEEVNKNVFMTRLEDVLHTAVNWGRKNSLWPFNFGTSCCYVEYATTLTGVHDLSRFGAEVIRASPRQADLMIVAGTCFVKMAPVIQRLYEQMLEPKWVISMGACANSGGMYDIYSVVQGVDKIIPVDVYVPGCPPRPEALIQALMLLQDQIQLERRPLSAVIGDDLQPVYKPKMMPERDRKNAQRIAVKNLRSMDEIK</sequence>
<dbReference type="EC" id="7.1.1.-" evidence="1"/>
<dbReference type="EMBL" id="CU468230">
    <property type="protein sequence ID" value="CAP02018.1"/>
    <property type="molecule type" value="Genomic_DNA"/>
</dbReference>
<dbReference type="SMR" id="B0VU55"/>
<dbReference type="KEGG" id="abm:ABSDF2713"/>
<dbReference type="HOGENOM" id="CLU_055737_7_3_6"/>
<dbReference type="Proteomes" id="UP000001741">
    <property type="component" value="Chromosome"/>
</dbReference>
<dbReference type="GO" id="GO:0005886">
    <property type="term" value="C:plasma membrane"/>
    <property type="evidence" value="ECO:0007669"/>
    <property type="project" value="UniProtKB-SubCell"/>
</dbReference>
<dbReference type="GO" id="GO:0045271">
    <property type="term" value="C:respiratory chain complex I"/>
    <property type="evidence" value="ECO:0007669"/>
    <property type="project" value="TreeGrafter"/>
</dbReference>
<dbReference type="GO" id="GO:0051539">
    <property type="term" value="F:4 iron, 4 sulfur cluster binding"/>
    <property type="evidence" value="ECO:0007669"/>
    <property type="project" value="UniProtKB-KW"/>
</dbReference>
<dbReference type="GO" id="GO:0005506">
    <property type="term" value="F:iron ion binding"/>
    <property type="evidence" value="ECO:0007669"/>
    <property type="project" value="UniProtKB-UniRule"/>
</dbReference>
<dbReference type="GO" id="GO:0008137">
    <property type="term" value="F:NADH dehydrogenase (ubiquinone) activity"/>
    <property type="evidence" value="ECO:0007669"/>
    <property type="project" value="InterPro"/>
</dbReference>
<dbReference type="GO" id="GO:0050136">
    <property type="term" value="F:NADH:ubiquinone reductase (non-electrogenic) activity"/>
    <property type="evidence" value="ECO:0007669"/>
    <property type="project" value="UniProtKB-UniRule"/>
</dbReference>
<dbReference type="GO" id="GO:0048038">
    <property type="term" value="F:quinone binding"/>
    <property type="evidence" value="ECO:0007669"/>
    <property type="project" value="UniProtKB-KW"/>
</dbReference>
<dbReference type="GO" id="GO:0009060">
    <property type="term" value="P:aerobic respiration"/>
    <property type="evidence" value="ECO:0007669"/>
    <property type="project" value="TreeGrafter"/>
</dbReference>
<dbReference type="GO" id="GO:0015990">
    <property type="term" value="P:electron transport coupled proton transport"/>
    <property type="evidence" value="ECO:0007669"/>
    <property type="project" value="TreeGrafter"/>
</dbReference>
<dbReference type="FunFam" id="3.40.50.12280:FF:000002">
    <property type="entry name" value="NADH-quinone oxidoreductase subunit B"/>
    <property type="match status" value="1"/>
</dbReference>
<dbReference type="Gene3D" id="3.40.50.12280">
    <property type="match status" value="1"/>
</dbReference>
<dbReference type="HAMAP" id="MF_01356">
    <property type="entry name" value="NDH1_NuoB"/>
    <property type="match status" value="1"/>
</dbReference>
<dbReference type="InterPro" id="IPR006137">
    <property type="entry name" value="NADH_UbQ_OxRdtase-like_20kDa"/>
</dbReference>
<dbReference type="InterPro" id="IPR006138">
    <property type="entry name" value="NADH_UQ_OxRdtase_20Kd_su"/>
</dbReference>
<dbReference type="NCBIfam" id="TIGR01957">
    <property type="entry name" value="nuoB_fam"/>
    <property type="match status" value="1"/>
</dbReference>
<dbReference type="NCBIfam" id="NF005012">
    <property type="entry name" value="PRK06411.1"/>
    <property type="match status" value="1"/>
</dbReference>
<dbReference type="PANTHER" id="PTHR11995">
    <property type="entry name" value="NADH DEHYDROGENASE"/>
    <property type="match status" value="1"/>
</dbReference>
<dbReference type="PANTHER" id="PTHR11995:SF14">
    <property type="entry name" value="NADH DEHYDROGENASE [UBIQUINONE] IRON-SULFUR PROTEIN 7, MITOCHONDRIAL"/>
    <property type="match status" value="1"/>
</dbReference>
<dbReference type="Pfam" id="PF01058">
    <property type="entry name" value="Oxidored_q6"/>
    <property type="match status" value="1"/>
</dbReference>
<dbReference type="SUPFAM" id="SSF56770">
    <property type="entry name" value="HydA/Nqo6-like"/>
    <property type="match status" value="1"/>
</dbReference>
<dbReference type="PROSITE" id="PS01150">
    <property type="entry name" value="COMPLEX1_20K"/>
    <property type="match status" value="1"/>
</dbReference>
<evidence type="ECO:0000255" key="1">
    <source>
        <dbReference type="HAMAP-Rule" id="MF_01356"/>
    </source>
</evidence>
<feature type="chain" id="PRO_0000376109" description="NADH-quinone oxidoreductase subunit B">
    <location>
        <begin position="1"/>
        <end position="225"/>
    </location>
</feature>
<feature type="binding site" evidence="1">
    <location>
        <position position="65"/>
    </location>
    <ligand>
        <name>[4Fe-4S] cluster</name>
        <dbReference type="ChEBI" id="CHEBI:49883"/>
    </ligand>
</feature>
<feature type="binding site" evidence="1">
    <location>
        <position position="66"/>
    </location>
    <ligand>
        <name>[4Fe-4S] cluster</name>
        <dbReference type="ChEBI" id="CHEBI:49883"/>
    </ligand>
</feature>
<feature type="binding site" evidence="1">
    <location>
        <position position="131"/>
    </location>
    <ligand>
        <name>[4Fe-4S] cluster</name>
        <dbReference type="ChEBI" id="CHEBI:49883"/>
    </ligand>
</feature>
<feature type="binding site" evidence="1">
    <location>
        <position position="160"/>
    </location>
    <ligand>
        <name>[4Fe-4S] cluster</name>
        <dbReference type="ChEBI" id="CHEBI:49883"/>
    </ligand>
</feature>
<organism>
    <name type="scientific">Acinetobacter baumannii (strain SDF)</name>
    <dbReference type="NCBI Taxonomy" id="509170"/>
    <lineage>
        <taxon>Bacteria</taxon>
        <taxon>Pseudomonadati</taxon>
        <taxon>Pseudomonadota</taxon>
        <taxon>Gammaproteobacteria</taxon>
        <taxon>Moraxellales</taxon>
        <taxon>Moraxellaceae</taxon>
        <taxon>Acinetobacter</taxon>
        <taxon>Acinetobacter calcoaceticus/baumannii complex</taxon>
    </lineage>
</organism>
<accession>B0VU55</accession>